<accession>A2BJY7</accession>
<reference key="1">
    <citation type="journal article" date="2007" name="Archaea">
        <title>The genome of Hyperthermus butylicus: a sulfur-reducing, peptide fermenting, neutrophilic Crenarchaeote growing up to 108 degrees C.</title>
        <authorList>
            <person name="Bruegger K."/>
            <person name="Chen L."/>
            <person name="Stark M."/>
            <person name="Zibat A."/>
            <person name="Redder P."/>
            <person name="Ruepp A."/>
            <person name="Awayez M."/>
            <person name="She Q."/>
            <person name="Garrett R.A."/>
            <person name="Klenk H.-P."/>
        </authorList>
    </citation>
    <scope>NUCLEOTIDE SEQUENCE [LARGE SCALE GENOMIC DNA]</scope>
    <source>
        <strain>DSM 5456 / JCM 9403 / PLM1-5</strain>
    </source>
</reference>
<gene>
    <name type="ordered locus">Hbut_0432</name>
</gene>
<keyword id="KW-0378">Hydrolase</keyword>
<keyword id="KW-0460">Magnesium</keyword>
<keyword id="KW-0479">Metal-binding</keyword>
<keyword id="KW-0546">Nucleotide metabolism</keyword>
<keyword id="KW-0547">Nucleotide-binding</keyword>
<keyword id="KW-1185">Reference proteome</keyword>
<proteinExistence type="inferred from homology"/>
<protein>
    <recommendedName>
        <fullName evidence="1">dITP/XTP pyrophosphatase</fullName>
        <ecNumber evidence="1">3.6.1.66</ecNumber>
    </recommendedName>
    <alternativeName>
        <fullName evidence="1">Non-canonical purine NTP pyrophosphatase</fullName>
    </alternativeName>
    <alternativeName>
        <fullName evidence="1">Non-standard purine NTP pyrophosphatase</fullName>
    </alternativeName>
    <alternativeName>
        <fullName evidence="1">Nucleoside-triphosphate diphosphatase</fullName>
    </alternativeName>
    <alternativeName>
        <fullName evidence="1">Nucleoside-triphosphate pyrophosphatase</fullName>
        <shortName evidence="1">NTPase</shortName>
    </alternativeName>
</protein>
<comment type="function">
    <text evidence="1">Pyrophosphatase that catalyzes the hydrolysis of nucleoside triphosphates to their monophosphate derivatives, with a high preference for the non-canonical purine nucleotides XTP (xanthosine triphosphate), dITP (deoxyinosine triphosphate) and ITP. Seems to function as a house-cleaning enzyme that removes non-canonical purine nucleotides from the nucleotide pool, thus preventing their incorporation into DNA/RNA and avoiding chromosomal lesions.</text>
</comment>
<comment type="catalytic activity">
    <reaction evidence="1">
        <text>XTP + H2O = XMP + diphosphate + H(+)</text>
        <dbReference type="Rhea" id="RHEA:28610"/>
        <dbReference type="ChEBI" id="CHEBI:15377"/>
        <dbReference type="ChEBI" id="CHEBI:15378"/>
        <dbReference type="ChEBI" id="CHEBI:33019"/>
        <dbReference type="ChEBI" id="CHEBI:57464"/>
        <dbReference type="ChEBI" id="CHEBI:61314"/>
        <dbReference type="EC" id="3.6.1.66"/>
    </reaction>
</comment>
<comment type="catalytic activity">
    <reaction evidence="1">
        <text>dITP + H2O = dIMP + diphosphate + H(+)</text>
        <dbReference type="Rhea" id="RHEA:28342"/>
        <dbReference type="ChEBI" id="CHEBI:15377"/>
        <dbReference type="ChEBI" id="CHEBI:15378"/>
        <dbReference type="ChEBI" id="CHEBI:33019"/>
        <dbReference type="ChEBI" id="CHEBI:61194"/>
        <dbReference type="ChEBI" id="CHEBI:61382"/>
        <dbReference type="EC" id="3.6.1.66"/>
    </reaction>
</comment>
<comment type="catalytic activity">
    <reaction evidence="1">
        <text>ITP + H2O = IMP + diphosphate + H(+)</text>
        <dbReference type="Rhea" id="RHEA:29399"/>
        <dbReference type="ChEBI" id="CHEBI:15377"/>
        <dbReference type="ChEBI" id="CHEBI:15378"/>
        <dbReference type="ChEBI" id="CHEBI:33019"/>
        <dbReference type="ChEBI" id="CHEBI:58053"/>
        <dbReference type="ChEBI" id="CHEBI:61402"/>
        <dbReference type="EC" id="3.6.1.66"/>
    </reaction>
</comment>
<comment type="cofactor">
    <cofactor evidence="1">
        <name>Mg(2+)</name>
        <dbReference type="ChEBI" id="CHEBI:18420"/>
    </cofactor>
    <text evidence="1">Binds 1 Mg(2+) ion per subunit.</text>
</comment>
<comment type="subunit">
    <text evidence="1">Homodimer.</text>
</comment>
<comment type="similarity">
    <text evidence="1">Belongs to the HAM1 NTPase family.</text>
</comment>
<name>IXTPA_HYPBU</name>
<feature type="chain" id="PRO_1000087378" description="dITP/XTP pyrophosphatase">
    <location>
        <begin position="1"/>
        <end position="190"/>
    </location>
</feature>
<feature type="active site" description="Proton acceptor" evidence="1">
    <location>
        <position position="68"/>
    </location>
</feature>
<feature type="binding site" evidence="1">
    <location>
        <begin position="10"/>
        <end position="15"/>
    </location>
    <ligand>
        <name>substrate</name>
    </ligand>
</feature>
<feature type="binding site" evidence="1">
    <location>
        <position position="39"/>
    </location>
    <ligand>
        <name>Mg(2+)</name>
        <dbReference type="ChEBI" id="CHEBI:18420"/>
    </ligand>
</feature>
<feature type="binding site" evidence="1">
    <location>
        <position position="68"/>
    </location>
    <ligand>
        <name>Mg(2+)</name>
        <dbReference type="ChEBI" id="CHEBI:18420"/>
    </ligand>
</feature>
<feature type="binding site" evidence="1">
    <location>
        <position position="69"/>
    </location>
    <ligand>
        <name>substrate</name>
    </ligand>
</feature>
<feature type="binding site" evidence="1">
    <location>
        <begin position="143"/>
        <end position="146"/>
    </location>
    <ligand>
        <name>substrate</name>
    </ligand>
</feature>
<feature type="binding site" evidence="1">
    <location>
        <position position="166"/>
    </location>
    <ligand>
        <name>substrate</name>
    </ligand>
</feature>
<feature type="binding site" evidence="1">
    <location>
        <begin position="171"/>
        <end position="172"/>
    </location>
    <ligand>
        <name>substrate</name>
    </ligand>
</feature>
<sequence length="190" mass="21059">MEARVILIATTNKHKIEEINEVLQSCGYRVEPAAASKLEVQSNRLEDVAAYAAIQAYLALQRPVIVEDAGLFVEALGGFPGPYSSYVFKTIGIRGLLKLLEDVENRRAYFKSVIALAHSGGVEVFTGTVHGVIAEKPRGDRGFGYDPVFIPEGSSKTFAEMETQEKNKFSHRGKAARELCRWLRQYGPPR</sequence>
<organism>
    <name type="scientific">Hyperthermus butylicus (strain DSM 5456 / JCM 9403 / PLM1-5)</name>
    <dbReference type="NCBI Taxonomy" id="415426"/>
    <lineage>
        <taxon>Archaea</taxon>
        <taxon>Thermoproteota</taxon>
        <taxon>Thermoprotei</taxon>
        <taxon>Desulfurococcales</taxon>
        <taxon>Pyrodictiaceae</taxon>
        <taxon>Hyperthermus</taxon>
    </lineage>
</organism>
<dbReference type="EC" id="3.6.1.66" evidence="1"/>
<dbReference type="EMBL" id="CP000493">
    <property type="protein sequence ID" value="ABM80298.1"/>
    <property type="molecule type" value="Genomic_DNA"/>
</dbReference>
<dbReference type="RefSeq" id="WP_011821616.1">
    <property type="nucleotide sequence ID" value="NC_008818.1"/>
</dbReference>
<dbReference type="SMR" id="A2BJY7"/>
<dbReference type="STRING" id="415426.Hbut_0432"/>
<dbReference type="EnsemblBacteria" id="ABM80298">
    <property type="protein sequence ID" value="ABM80298"/>
    <property type="gene ID" value="Hbut_0432"/>
</dbReference>
<dbReference type="GeneID" id="4782980"/>
<dbReference type="KEGG" id="hbu:Hbut_0432"/>
<dbReference type="eggNOG" id="arCOG04184">
    <property type="taxonomic scope" value="Archaea"/>
</dbReference>
<dbReference type="HOGENOM" id="CLU_082080_1_0_2"/>
<dbReference type="OrthoDB" id="372108at2157"/>
<dbReference type="Proteomes" id="UP000002593">
    <property type="component" value="Chromosome"/>
</dbReference>
<dbReference type="GO" id="GO:0005737">
    <property type="term" value="C:cytoplasm"/>
    <property type="evidence" value="ECO:0007669"/>
    <property type="project" value="TreeGrafter"/>
</dbReference>
<dbReference type="GO" id="GO:0035870">
    <property type="term" value="F:dITP diphosphatase activity"/>
    <property type="evidence" value="ECO:0007669"/>
    <property type="project" value="RHEA"/>
</dbReference>
<dbReference type="GO" id="GO:0036220">
    <property type="term" value="F:ITP diphosphatase activity"/>
    <property type="evidence" value="ECO:0007669"/>
    <property type="project" value="UniProtKB-EC"/>
</dbReference>
<dbReference type="GO" id="GO:0046872">
    <property type="term" value="F:metal ion binding"/>
    <property type="evidence" value="ECO:0007669"/>
    <property type="project" value="UniProtKB-KW"/>
</dbReference>
<dbReference type="GO" id="GO:0000166">
    <property type="term" value="F:nucleotide binding"/>
    <property type="evidence" value="ECO:0007669"/>
    <property type="project" value="UniProtKB-KW"/>
</dbReference>
<dbReference type="GO" id="GO:0017111">
    <property type="term" value="F:ribonucleoside triphosphate phosphatase activity"/>
    <property type="evidence" value="ECO:0007669"/>
    <property type="project" value="InterPro"/>
</dbReference>
<dbReference type="GO" id="GO:0036222">
    <property type="term" value="F:XTP diphosphatase activity"/>
    <property type="evidence" value="ECO:0007669"/>
    <property type="project" value="RHEA"/>
</dbReference>
<dbReference type="GO" id="GO:0009117">
    <property type="term" value="P:nucleotide metabolic process"/>
    <property type="evidence" value="ECO:0007669"/>
    <property type="project" value="UniProtKB-KW"/>
</dbReference>
<dbReference type="GO" id="GO:0009146">
    <property type="term" value="P:purine nucleoside triphosphate catabolic process"/>
    <property type="evidence" value="ECO:0007669"/>
    <property type="project" value="UniProtKB-UniRule"/>
</dbReference>
<dbReference type="CDD" id="cd00515">
    <property type="entry name" value="HAM1"/>
    <property type="match status" value="1"/>
</dbReference>
<dbReference type="FunFam" id="3.90.950.10:FF:000001">
    <property type="entry name" value="dITP/XTP pyrophosphatase"/>
    <property type="match status" value="1"/>
</dbReference>
<dbReference type="Gene3D" id="3.90.950.10">
    <property type="match status" value="1"/>
</dbReference>
<dbReference type="HAMAP" id="MF_01405">
    <property type="entry name" value="Non_canon_purine_NTPase"/>
    <property type="match status" value="1"/>
</dbReference>
<dbReference type="InterPro" id="IPR020922">
    <property type="entry name" value="dITP/XTP_pyrophosphatase"/>
</dbReference>
<dbReference type="InterPro" id="IPR029001">
    <property type="entry name" value="ITPase-like_fam"/>
</dbReference>
<dbReference type="InterPro" id="IPR002637">
    <property type="entry name" value="RdgB/HAM1"/>
</dbReference>
<dbReference type="NCBIfam" id="NF011396">
    <property type="entry name" value="PRK14821.1"/>
    <property type="match status" value="1"/>
</dbReference>
<dbReference type="NCBIfam" id="TIGR00042">
    <property type="entry name" value="RdgB/HAM1 family non-canonical purine NTP pyrophosphatase"/>
    <property type="match status" value="1"/>
</dbReference>
<dbReference type="PANTHER" id="PTHR11067:SF9">
    <property type="entry name" value="INOSINE TRIPHOSPHATE PYROPHOSPHATASE"/>
    <property type="match status" value="1"/>
</dbReference>
<dbReference type="PANTHER" id="PTHR11067">
    <property type="entry name" value="INOSINE TRIPHOSPHATE PYROPHOSPHATASE/HAM1 PROTEIN"/>
    <property type="match status" value="1"/>
</dbReference>
<dbReference type="Pfam" id="PF01725">
    <property type="entry name" value="Ham1p_like"/>
    <property type="match status" value="1"/>
</dbReference>
<dbReference type="SUPFAM" id="SSF52972">
    <property type="entry name" value="ITPase-like"/>
    <property type="match status" value="1"/>
</dbReference>
<evidence type="ECO:0000255" key="1">
    <source>
        <dbReference type="HAMAP-Rule" id="MF_01405"/>
    </source>
</evidence>